<organism>
    <name type="scientific">Xanthomonas oryzae pv. oryzae (strain MAFF 311018)</name>
    <dbReference type="NCBI Taxonomy" id="342109"/>
    <lineage>
        <taxon>Bacteria</taxon>
        <taxon>Pseudomonadati</taxon>
        <taxon>Pseudomonadota</taxon>
        <taxon>Gammaproteobacteria</taxon>
        <taxon>Lysobacterales</taxon>
        <taxon>Lysobacteraceae</taxon>
        <taxon>Xanthomonas</taxon>
    </lineage>
</organism>
<keyword id="KW-0687">Ribonucleoprotein</keyword>
<keyword id="KW-0689">Ribosomal protein</keyword>
<keyword id="KW-0694">RNA-binding</keyword>
<keyword id="KW-0699">rRNA-binding</keyword>
<gene>
    <name evidence="1" type="primary">rplX</name>
    <name type="ordered locus">XOO3376</name>
</gene>
<evidence type="ECO:0000255" key="1">
    <source>
        <dbReference type="HAMAP-Rule" id="MF_01326"/>
    </source>
</evidence>
<evidence type="ECO:0000305" key="2"/>
<dbReference type="EMBL" id="AP008229">
    <property type="protein sequence ID" value="BAE70131.1"/>
    <property type="molecule type" value="Genomic_DNA"/>
</dbReference>
<dbReference type="RefSeq" id="WP_011260025.1">
    <property type="nucleotide sequence ID" value="NC_007705.1"/>
</dbReference>
<dbReference type="SMR" id="Q2NZZ6"/>
<dbReference type="KEGG" id="xom:XOO3376"/>
<dbReference type="HOGENOM" id="CLU_093315_2_2_6"/>
<dbReference type="GO" id="GO:1990904">
    <property type="term" value="C:ribonucleoprotein complex"/>
    <property type="evidence" value="ECO:0007669"/>
    <property type="project" value="UniProtKB-KW"/>
</dbReference>
<dbReference type="GO" id="GO:0005840">
    <property type="term" value="C:ribosome"/>
    <property type="evidence" value="ECO:0007669"/>
    <property type="project" value="UniProtKB-KW"/>
</dbReference>
<dbReference type="GO" id="GO:0019843">
    <property type="term" value="F:rRNA binding"/>
    <property type="evidence" value="ECO:0007669"/>
    <property type="project" value="UniProtKB-UniRule"/>
</dbReference>
<dbReference type="GO" id="GO:0003735">
    <property type="term" value="F:structural constituent of ribosome"/>
    <property type="evidence" value="ECO:0007669"/>
    <property type="project" value="InterPro"/>
</dbReference>
<dbReference type="GO" id="GO:0006412">
    <property type="term" value="P:translation"/>
    <property type="evidence" value="ECO:0007669"/>
    <property type="project" value="UniProtKB-UniRule"/>
</dbReference>
<dbReference type="CDD" id="cd06089">
    <property type="entry name" value="KOW_RPL26"/>
    <property type="match status" value="1"/>
</dbReference>
<dbReference type="FunFam" id="2.30.30.30:FF:000004">
    <property type="entry name" value="50S ribosomal protein L24"/>
    <property type="match status" value="1"/>
</dbReference>
<dbReference type="Gene3D" id="2.30.30.30">
    <property type="match status" value="1"/>
</dbReference>
<dbReference type="HAMAP" id="MF_01326_B">
    <property type="entry name" value="Ribosomal_uL24_B"/>
    <property type="match status" value="1"/>
</dbReference>
<dbReference type="InterPro" id="IPR005824">
    <property type="entry name" value="KOW"/>
</dbReference>
<dbReference type="InterPro" id="IPR014722">
    <property type="entry name" value="Rib_uL2_dom2"/>
</dbReference>
<dbReference type="InterPro" id="IPR003256">
    <property type="entry name" value="Ribosomal_uL24"/>
</dbReference>
<dbReference type="InterPro" id="IPR041988">
    <property type="entry name" value="Ribosomal_uL24_KOW"/>
</dbReference>
<dbReference type="InterPro" id="IPR008991">
    <property type="entry name" value="Translation_prot_SH3-like_sf"/>
</dbReference>
<dbReference type="NCBIfam" id="TIGR01079">
    <property type="entry name" value="rplX_bact"/>
    <property type="match status" value="1"/>
</dbReference>
<dbReference type="PANTHER" id="PTHR12903">
    <property type="entry name" value="MITOCHONDRIAL RIBOSOMAL PROTEIN L24"/>
    <property type="match status" value="1"/>
</dbReference>
<dbReference type="Pfam" id="PF00467">
    <property type="entry name" value="KOW"/>
    <property type="match status" value="1"/>
</dbReference>
<dbReference type="Pfam" id="PF17136">
    <property type="entry name" value="ribosomal_L24"/>
    <property type="match status" value="1"/>
</dbReference>
<dbReference type="SMART" id="SM00739">
    <property type="entry name" value="KOW"/>
    <property type="match status" value="1"/>
</dbReference>
<dbReference type="SUPFAM" id="SSF50104">
    <property type="entry name" value="Translation proteins SH3-like domain"/>
    <property type="match status" value="1"/>
</dbReference>
<reference key="1">
    <citation type="journal article" date="2005" name="Jpn. Agric. Res. Q.">
        <title>Genome sequence of Xanthomonas oryzae pv. oryzae suggests contribution of large numbers of effector genes and insertion sequences to its race diversity.</title>
        <authorList>
            <person name="Ochiai H."/>
            <person name="Inoue Y."/>
            <person name="Takeya M."/>
            <person name="Sasaki A."/>
            <person name="Kaku H."/>
        </authorList>
    </citation>
    <scope>NUCLEOTIDE SEQUENCE [LARGE SCALE GENOMIC DNA]</scope>
    <source>
        <strain>MAFF 311018</strain>
    </source>
</reference>
<proteinExistence type="inferred from homology"/>
<comment type="function">
    <text evidence="1">One of two assembly initiator proteins, it binds directly to the 5'-end of the 23S rRNA, where it nucleates assembly of the 50S subunit.</text>
</comment>
<comment type="function">
    <text evidence="1">One of the proteins that surrounds the polypeptide exit tunnel on the outside of the subunit.</text>
</comment>
<comment type="subunit">
    <text evidence="1">Part of the 50S ribosomal subunit.</text>
</comment>
<comment type="similarity">
    <text evidence="1">Belongs to the universal ribosomal protein uL24 family.</text>
</comment>
<accession>Q2NZZ6</accession>
<name>RL24_XANOM</name>
<sequence>MANRIKKGDQVVINTGKDKGKQGEVVRVDGDRVIVSNANLIKRHTKPNPQAGVAGGVVEREASIHISNVNIVNPATGKGERVGFKVLEDGRKLRVFRSSGEALDA</sequence>
<feature type="chain" id="PRO_0000241690" description="Large ribosomal subunit protein uL24">
    <location>
        <begin position="1"/>
        <end position="105"/>
    </location>
</feature>
<protein>
    <recommendedName>
        <fullName evidence="1">Large ribosomal subunit protein uL24</fullName>
    </recommendedName>
    <alternativeName>
        <fullName evidence="2">50S ribosomal protein L24</fullName>
    </alternativeName>
</protein>